<organism>
    <name type="scientific">Deinococcus deserti (strain DSM 17065 / CIP 109153 / LMG 22923 / VCD115)</name>
    <dbReference type="NCBI Taxonomy" id="546414"/>
    <lineage>
        <taxon>Bacteria</taxon>
        <taxon>Thermotogati</taxon>
        <taxon>Deinococcota</taxon>
        <taxon>Deinococci</taxon>
        <taxon>Deinococcales</taxon>
        <taxon>Deinococcaceae</taxon>
        <taxon>Deinococcus</taxon>
    </lineage>
</organism>
<name>TATA_DEIDV</name>
<evidence type="ECO:0000255" key="1">
    <source>
        <dbReference type="HAMAP-Rule" id="MF_00236"/>
    </source>
</evidence>
<evidence type="ECO:0000256" key="2">
    <source>
        <dbReference type="SAM" id="MobiDB-lite"/>
    </source>
</evidence>
<comment type="function">
    <text evidence="1">Part of the twin-arginine translocation (Tat) system that transports large folded proteins containing a characteristic twin-arginine motif in their signal peptide across membranes. TatA could form the protein-conducting channel of the Tat system.</text>
</comment>
<comment type="subunit">
    <text evidence="1">Forms a complex with TatC.</text>
</comment>
<comment type="subcellular location">
    <subcellularLocation>
        <location evidence="1">Cell membrane</location>
        <topology evidence="1">Single-pass membrane protein</topology>
    </subcellularLocation>
</comment>
<comment type="similarity">
    <text evidence="1">Belongs to the TatA/E family.</text>
</comment>
<feature type="chain" id="PRO_1000204435" description="Sec-independent protein translocase protein TatA">
    <location>
        <begin position="1"/>
        <end position="82"/>
    </location>
</feature>
<feature type="transmembrane region" description="Helical" evidence="1">
    <location>
        <begin position="1"/>
        <end position="21"/>
    </location>
</feature>
<feature type="region of interest" description="Disordered" evidence="2">
    <location>
        <begin position="36"/>
        <end position="82"/>
    </location>
</feature>
<feature type="compositionally biased region" description="Basic and acidic residues" evidence="2">
    <location>
        <begin position="36"/>
        <end position="47"/>
    </location>
</feature>
<proteinExistence type="inferred from homology"/>
<accession>C1D186</accession>
<keyword id="KW-1003">Cell membrane</keyword>
<keyword id="KW-0472">Membrane</keyword>
<keyword id="KW-0653">Protein transport</keyword>
<keyword id="KW-1185">Reference proteome</keyword>
<keyword id="KW-0811">Translocation</keyword>
<keyword id="KW-0812">Transmembrane</keyword>
<keyword id="KW-1133">Transmembrane helix</keyword>
<keyword id="KW-0813">Transport</keyword>
<reference key="1">
    <citation type="journal article" date="2009" name="PLoS Genet.">
        <title>Alliance of proteomics and genomics to unravel the specificities of Sahara bacterium Deinococcus deserti.</title>
        <authorList>
            <person name="de Groot A."/>
            <person name="Dulermo R."/>
            <person name="Ortet P."/>
            <person name="Blanchard L."/>
            <person name="Guerin P."/>
            <person name="Fernandez B."/>
            <person name="Vacherie B."/>
            <person name="Dossat C."/>
            <person name="Jolivet E."/>
            <person name="Siguier P."/>
            <person name="Chandler M."/>
            <person name="Barakat M."/>
            <person name="Dedieu A."/>
            <person name="Barbe V."/>
            <person name="Heulin T."/>
            <person name="Sommer S."/>
            <person name="Achouak W."/>
            <person name="Armengaud J."/>
        </authorList>
    </citation>
    <scope>NUCLEOTIDE SEQUENCE [LARGE SCALE GENOMIC DNA]</scope>
    <source>
        <strain>DSM 17065 / CIP 109153 / LMG 22923 / VCD115</strain>
    </source>
</reference>
<sequence length="82" mass="8909">MLGFGPFELILIVVIIALLFGARKLPELGKGMGRGIKEFKQEMHEPSPPRPQVTDIPSQRLDPVTGAPVSTESTVPASDRRS</sequence>
<protein>
    <recommendedName>
        <fullName evidence="1">Sec-independent protein translocase protein TatA</fullName>
    </recommendedName>
</protein>
<gene>
    <name evidence="1" type="primary">tatA</name>
    <name type="ordered locus">Deide_07530</name>
</gene>
<dbReference type="EMBL" id="CP001114">
    <property type="protein sequence ID" value="ACO45610.1"/>
    <property type="molecule type" value="Genomic_DNA"/>
</dbReference>
<dbReference type="RefSeq" id="WP_012692733.1">
    <property type="nucleotide sequence ID" value="NC_012526.1"/>
</dbReference>
<dbReference type="SMR" id="C1D186"/>
<dbReference type="STRING" id="546414.Deide_07530"/>
<dbReference type="PaxDb" id="546414-Deide_07530"/>
<dbReference type="KEGG" id="ddr:Deide_07530"/>
<dbReference type="eggNOG" id="COG1826">
    <property type="taxonomic scope" value="Bacteria"/>
</dbReference>
<dbReference type="HOGENOM" id="CLU_086034_4_3_0"/>
<dbReference type="OrthoDB" id="72155at2"/>
<dbReference type="Proteomes" id="UP000002208">
    <property type="component" value="Chromosome"/>
</dbReference>
<dbReference type="GO" id="GO:0033281">
    <property type="term" value="C:TAT protein transport complex"/>
    <property type="evidence" value="ECO:0007669"/>
    <property type="project" value="UniProtKB-UniRule"/>
</dbReference>
<dbReference type="GO" id="GO:0008320">
    <property type="term" value="F:protein transmembrane transporter activity"/>
    <property type="evidence" value="ECO:0007669"/>
    <property type="project" value="UniProtKB-UniRule"/>
</dbReference>
<dbReference type="GO" id="GO:0043953">
    <property type="term" value="P:protein transport by the Tat complex"/>
    <property type="evidence" value="ECO:0007669"/>
    <property type="project" value="UniProtKB-UniRule"/>
</dbReference>
<dbReference type="Gene3D" id="1.20.5.3310">
    <property type="match status" value="1"/>
</dbReference>
<dbReference type="HAMAP" id="MF_00236">
    <property type="entry name" value="TatA_E"/>
    <property type="match status" value="1"/>
</dbReference>
<dbReference type="InterPro" id="IPR003369">
    <property type="entry name" value="TatA/B/E"/>
</dbReference>
<dbReference type="InterPro" id="IPR006312">
    <property type="entry name" value="TatA/E"/>
</dbReference>
<dbReference type="NCBIfam" id="TIGR01411">
    <property type="entry name" value="tatAE"/>
    <property type="match status" value="1"/>
</dbReference>
<dbReference type="PANTHER" id="PTHR42982">
    <property type="entry name" value="SEC-INDEPENDENT PROTEIN TRANSLOCASE PROTEIN TATA"/>
    <property type="match status" value="1"/>
</dbReference>
<dbReference type="PANTHER" id="PTHR42982:SF8">
    <property type="entry name" value="SEC-INDEPENDENT PROTEIN TRANSLOCASE PROTEIN TATA"/>
    <property type="match status" value="1"/>
</dbReference>
<dbReference type="Pfam" id="PF02416">
    <property type="entry name" value="TatA_B_E"/>
    <property type="match status" value="1"/>
</dbReference>